<comment type="function">
    <text evidence="1">Catalyzes the intermembrane transfer of phosphatidylglycerol and phosphatidylinositol.</text>
</comment>
<comment type="subunit">
    <text evidence="1">Monomer.</text>
</comment>
<comment type="similarity">
    <text evidence="3">Belongs to the NPC2 family.</text>
</comment>
<dbReference type="EMBL" id="AE017344">
    <property type="protein sequence ID" value="AAW42927.1"/>
    <property type="molecule type" value="Genomic_DNA"/>
</dbReference>
<dbReference type="RefSeq" id="XP_570234.1">
    <property type="nucleotide sequence ID" value="XM_570234.1"/>
</dbReference>
<dbReference type="SMR" id="P0CP28"/>
<dbReference type="FunCoup" id="P0CP28">
    <property type="interactions" value="1"/>
</dbReference>
<dbReference type="STRING" id="214684.P0CP28"/>
<dbReference type="PaxDb" id="214684-P0CP28"/>
<dbReference type="EnsemblFungi" id="AAW42927">
    <property type="protein sequence ID" value="AAW42927"/>
    <property type="gene ID" value="CND01990"/>
</dbReference>
<dbReference type="GeneID" id="3256839"/>
<dbReference type="KEGG" id="cne:CND01990"/>
<dbReference type="VEuPathDB" id="FungiDB:CND01990"/>
<dbReference type="eggNOG" id="KOG4680">
    <property type="taxonomic scope" value="Eukaryota"/>
</dbReference>
<dbReference type="HOGENOM" id="CLU_097982_3_0_1"/>
<dbReference type="InParanoid" id="P0CP28"/>
<dbReference type="OMA" id="ASKYSYW"/>
<dbReference type="OrthoDB" id="6409159at2759"/>
<dbReference type="Proteomes" id="UP000002149">
    <property type="component" value="Chromosome 4"/>
</dbReference>
<dbReference type="GO" id="GO:0032934">
    <property type="term" value="F:sterol binding"/>
    <property type="evidence" value="ECO:0000318"/>
    <property type="project" value="GO_Central"/>
</dbReference>
<dbReference type="GO" id="GO:0032366">
    <property type="term" value="P:intracellular sterol transport"/>
    <property type="evidence" value="ECO:0007669"/>
    <property type="project" value="InterPro"/>
</dbReference>
<dbReference type="GO" id="GO:0015918">
    <property type="term" value="P:sterol transport"/>
    <property type="evidence" value="ECO:0000318"/>
    <property type="project" value="GO_Central"/>
</dbReference>
<dbReference type="CDD" id="cd00917">
    <property type="entry name" value="PG-PI_TP"/>
    <property type="match status" value="1"/>
</dbReference>
<dbReference type="FunFam" id="2.70.220.10:FF:000002">
    <property type="entry name" value="Phosphatidylglycerol/phosphatidylinositol transfer protein"/>
    <property type="match status" value="1"/>
</dbReference>
<dbReference type="FunFam" id="2.70.220.10:FF:000004">
    <property type="entry name" value="Related to phosphatidylglycerol/phosphatidylinositol transfer protein"/>
    <property type="match status" value="1"/>
</dbReference>
<dbReference type="Gene3D" id="2.70.220.10">
    <property type="entry name" value="Ganglioside GM2 activator"/>
    <property type="match status" value="1"/>
</dbReference>
<dbReference type="InterPro" id="IPR036846">
    <property type="entry name" value="GM2-AP_sf"/>
</dbReference>
<dbReference type="InterPro" id="IPR014756">
    <property type="entry name" value="Ig_E-set"/>
</dbReference>
<dbReference type="InterPro" id="IPR003172">
    <property type="entry name" value="ML_dom"/>
</dbReference>
<dbReference type="InterPro" id="IPR033917">
    <property type="entry name" value="ML_PG-PI_TP"/>
</dbReference>
<dbReference type="InterPro" id="IPR039670">
    <property type="entry name" value="NPC2-like"/>
</dbReference>
<dbReference type="PANTHER" id="PTHR11306">
    <property type="entry name" value="NIEMANN PICK TYPE C2 PROTEIN NPC2-RELATED"/>
    <property type="match status" value="1"/>
</dbReference>
<dbReference type="PANTHER" id="PTHR11306:SF0">
    <property type="entry name" value="PHOSPHATIDYLGLYCEROL_PHOSPHATIDYLINOSITOL TRANSFER PROTEIN"/>
    <property type="match status" value="1"/>
</dbReference>
<dbReference type="Pfam" id="PF02221">
    <property type="entry name" value="E1_DerP2_DerF2"/>
    <property type="match status" value="1"/>
</dbReference>
<dbReference type="SMART" id="SM00737">
    <property type="entry name" value="ML"/>
    <property type="match status" value="1"/>
</dbReference>
<dbReference type="SUPFAM" id="SSF81296">
    <property type="entry name" value="E set domains"/>
    <property type="match status" value="1"/>
</dbReference>
<feature type="signal peptide" evidence="2">
    <location>
        <begin position="1"/>
        <end position="20"/>
    </location>
</feature>
<feature type="propeptide" id="PRO_0000019879" evidence="1">
    <location>
        <begin position="21"/>
        <end position="43"/>
    </location>
</feature>
<feature type="chain" id="PRO_0000019880" description="Phosphatidylglycerol/phosphatidylinositol transfer protein">
    <location>
        <begin position="44"/>
        <end position="180"/>
    </location>
</feature>
<reference key="1">
    <citation type="journal article" date="2005" name="Science">
        <title>The genome of the basidiomycetous yeast and human pathogen Cryptococcus neoformans.</title>
        <authorList>
            <person name="Loftus B.J."/>
            <person name="Fung E."/>
            <person name="Roncaglia P."/>
            <person name="Rowley D."/>
            <person name="Amedeo P."/>
            <person name="Bruno D."/>
            <person name="Vamathevan J."/>
            <person name="Miranda M."/>
            <person name="Anderson I.J."/>
            <person name="Fraser J.A."/>
            <person name="Allen J.E."/>
            <person name="Bosdet I.E."/>
            <person name="Brent M.R."/>
            <person name="Chiu R."/>
            <person name="Doering T.L."/>
            <person name="Donlin M.J."/>
            <person name="D'Souza C.A."/>
            <person name="Fox D.S."/>
            <person name="Grinberg V."/>
            <person name="Fu J."/>
            <person name="Fukushima M."/>
            <person name="Haas B.J."/>
            <person name="Huang J.C."/>
            <person name="Janbon G."/>
            <person name="Jones S.J.M."/>
            <person name="Koo H.L."/>
            <person name="Krzywinski M.I."/>
            <person name="Kwon-Chung K.J."/>
            <person name="Lengeler K.B."/>
            <person name="Maiti R."/>
            <person name="Marra M.A."/>
            <person name="Marra R.E."/>
            <person name="Mathewson C.A."/>
            <person name="Mitchell T.G."/>
            <person name="Pertea M."/>
            <person name="Riggs F.R."/>
            <person name="Salzberg S.L."/>
            <person name="Schein J.E."/>
            <person name="Shvartsbeyn A."/>
            <person name="Shin H."/>
            <person name="Shumway M."/>
            <person name="Specht C.A."/>
            <person name="Suh B.B."/>
            <person name="Tenney A."/>
            <person name="Utterback T.R."/>
            <person name="Wickes B.L."/>
            <person name="Wortman J.R."/>
            <person name="Wye N.H."/>
            <person name="Kronstad J.W."/>
            <person name="Lodge J.K."/>
            <person name="Heitman J."/>
            <person name="Davis R.W."/>
            <person name="Fraser C.M."/>
            <person name="Hyman R.W."/>
        </authorList>
    </citation>
    <scope>NUCLEOTIDE SEQUENCE [LARGE SCALE GENOMIC DNA]</scope>
    <source>
        <strain>JEC21 / ATCC MYA-565</strain>
    </source>
</reference>
<evidence type="ECO:0000250" key="1"/>
<evidence type="ECO:0000255" key="2"/>
<evidence type="ECO:0000305" key="3"/>
<protein>
    <recommendedName>
        <fullName>Phosphatidylglycerol/phosphatidylinositol transfer protein</fullName>
        <shortName>PG/PI-TP</shortName>
    </recommendedName>
</protein>
<name>NPC2_CRYNJ</name>
<sequence>MKLAPFLIPFIATTVTASLAGEALSWAGQLVGGGRGALATGDGPVRTENSWSYVDCGLATDAIQLKSIKVHPDPPVPGKNLTVTVEGDVLETIEEGAYVDVTVKLGLIKLLQKEFDVCDEARHANASVQCPVQPGPYTVTETVELPQEIPKAKFSVLVRGYTVDDEDMVCLDLFVDFMKK</sequence>
<organism>
    <name type="scientific">Cryptococcus neoformans var. neoformans serotype D (strain JEC21 / ATCC MYA-565)</name>
    <name type="common">Filobasidiella neoformans</name>
    <dbReference type="NCBI Taxonomy" id="214684"/>
    <lineage>
        <taxon>Eukaryota</taxon>
        <taxon>Fungi</taxon>
        <taxon>Dikarya</taxon>
        <taxon>Basidiomycota</taxon>
        <taxon>Agaricomycotina</taxon>
        <taxon>Tremellomycetes</taxon>
        <taxon>Tremellales</taxon>
        <taxon>Cryptococcaceae</taxon>
        <taxon>Cryptococcus</taxon>
        <taxon>Cryptococcus neoformans species complex</taxon>
    </lineage>
</organism>
<keyword id="KW-0445">Lipid transport</keyword>
<keyword id="KW-1185">Reference proteome</keyword>
<keyword id="KW-0732">Signal</keyword>
<keyword id="KW-0813">Transport</keyword>
<gene>
    <name type="primary">NPC2</name>
    <name type="ordered locus">CND01990</name>
</gene>
<accession>P0CP28</accession>
<accession>Q55TL6</accession>
<accession>Q5KIR9</accession>
<proteinExistence type="inferred from homology"/>